<keyword id="KW-1185">Reference proteome</keyword>
<keyword id="KW-0687">Ribonucleoprotein</keyword>
<keyword id="KW-0689">Ribosomal protein</keyword>
<keyword id="KW-0694">RNA-binding</keyword>
<keyword id="KW-0699">rRNA-binding</keyword>
<proteinExistence type="inferred from homology"/>
<protein>
    <recommendedName>
        <fullName evidence="1">Large ribosomal subunit protein uL22</fullName>
    </recommendedName>
    <alternativeName>
        <fullName evidence="2">50S ribosomal protein L22</fullName>
    </alternativeName>
</protein>
<comment type="function">
    <text evidence="1">This protein binds specifically to 23S rRNA; its binding is stimulated by other ribosomal proteins, e.g. L4, L17, and L20. It is important during the early stages of 50S assembly. It makes multiple contacts with different domains of the 23S rRNA in the assembled 50S subunit and ribosome (By similarity).</text>
</comment>
<comment type="function">
    <text evidence="1">The globular domain of the protein is located near the polypeptide exit tunnel on the outside of the subunit, while an extended beta-hairpin is found that lines the wall of the exit tunnel in the center of the 70S ribosome.</text>
</comment>
<comment type="subunit">
    <text evidence="1">Part of the 50S ribosomal subunit.</text>
</comment>
<comment type="similarity">
    <text evidence="1">Belongs to the universal ribosomal protein uL22 family.</text>
</comment>
<feature type="chain" id="PRO_1000214610" description="Large ribosomal subunit protein uL22">
    <location>
        <begin position="1"/>
        <end position="121"/>
    </location>
</feature>
<organism>
    <name type="scientific">Micrococcus luteus (strain ATCC 4698 / DSM 20030 / JCM 1464 / CCM 169 / CCUG 5858 / IAM 1056 / NBRC 3333 / NCIMB 9278 / NCTC 2665 / VKM Ac-2230)</name>
    <name type="common">Micrococcus lysodeikticus</name>
    <dbReference type="NCBI Taxonomy" id="465515"/>
    <lineage>
        <taxon>Bacteria</taxon>
        <taxon>Bacillati</taxon>
        <taxon>Actinomycetota</taxon>
        <taxon>Actinomycetes</taxon>
        <taxon>Micrococcales</taxon>
        <taxon>Micrococcaceae</taxon>
        <taxon>Micrococcus</taxon>
    </lineage>
</organism>
<dbReference type="EMBL" id="CP001628">
    <property type="protein sequence ID" value="ACS31198.1"/>
    <property type="molecule type" value="Genomic_DNA"/>
</dbReference>
<dbReference type="RefSeq" id="WP_002857477.1">
    <property type="nucleotide sequence ID" value="NZ_WBMF01000001.1"/>
</dbReference>
<dbReference type="SMR" id="C5CC57"/>
<dbReference type="STRING" id="465515.Mlut_17110"/>
<dbReference type="EnsemblBacteria" id="ACS31198">
    <property type="protein sequence ID" value="ACS31198"/>
    <property type="gene ID" value="Mlut_17110"/>
</dbReference>
<dbReference type="GeneID" id="93343578"/>
<dbReference type="KEGG" id="mlu:Mlut_17110"/>
<dbReference type="eggNOG" id="COG0091">
    <property type="taxonomic scope" value="Bacteria"/>
</dbReference>
<dbReference type="HOGENOM" id="CLU_083987_3_3_11"/>
<dbReference type="Proteomes" id="UP000000738">
    <property type="component" value="Chromosome"/>
</dbReference>
<dbReference type="GO" id="GO:0022625">
    <property type="term" value="C:cytosolic large ribosomal subunit"/>
    <property type="evidence" value="ECO:0007669"/>
    <property type="project" value="TreeGrafter"/>
</dbReference>
<dbReference type="GO" id="GO:0019843">
    <property type="term" value="F:rRNA binding"/>
    <property type="evidence" value="ECO:0007669"/>
    <property type="project" value="UniProtKB-UniRule"/>
</dbReference>
<dbReference type="GO" id="GO:0003735">
    <property type="term" value="F:structural constituent of ribosome"/>
    <property type="evidence" value="ECO:0007669"/>
    <property type="project" value="InterPro"/>
</dbReference>
<dbReference type="GO" id="GO:0006412">
    <property type="term" value="P:translation"/>
    <property type="evidence" value="ECO:0007669"/>
    <property type="project" value="UniProtKB-UniRule"/>
</dbReference>
<dbReference type="CDD" id="cd00336">
    <property type="entry name" value="Ribosomal_L22"/>
    <property type="match status" value="1"/>
</dbReference>
<dbReference type="Gene3D" id="3.90.470.10">
    <property type="entry name" value="Ribosomal protein L22/L17"/>
    <property type="match status" value="1"/>
</dbReference>
<dbReference type="HAMAP" id="MF_01331_B">
    <property type="entry name" value="Ribosomal_uL22_B"/>
    <property type="match status" value="1"/>
</dbReference>
<dbReference type="InterPro" id="IPR001063">
    <property type="entry name" value="Ribosomal_uL22"/>
</dbReference>
<dbReference type="InterPro" id="IPR005727">
    <property type="entry name" value="Ribosomal_uL22_bac/chlpt-type"/>
</dbReference>
<dbReference type="InterPro" id="IPR047867">
    <property type="entry name" value="Ribosomal_uL22_bac/org-type"/>
</dbReference>
<dbReference type="InterPro" id="IPR018260">
    <property type="entry name" value="Ribosomal_uL22_CS"/>
</dbReference>
<dbReference type="InterPro" id="IPR036394">
    <property type="entry name" value="Ribosomal_uL22_sf"/>
</dbReference>
<dbReference type="NCBIfam" id="TIGR01044">
    <property type="entry name" value="rplV_bact"/>
    <property type="match status" value="1"/>
</dbReference>
<dbReference type="PANTHER" id="PTHR13501">
    <property type="entry name" value="CHLOROPLAST 50S RIBOSOMAL PROTEIN L22-RELATED"/>
    <property type="match status" value="1"/>
</dbReference>
<dbReference type="PANTHER" id="PTHR13501:SF8">
    <property type="entry name" value="LARGE RIBOSOMAL SUBUNIT PROTEIN UL22M"/>
    <property type="match status" value="1"/>
</dbReference>
<dbReference type="Pfam" id="PF00237">
    <property type="entry name" value="Ribosomal_L22"/>
    <property type="match status" value="1"/>
</dbReference>
<dbReference type="SUPFAM" id="SSF54843">
    <property type="entry name" value="Ribosomal protein L22"/>
    <property type="match status" value="1"/>
</dbReference>
<dbReference type="PROSITE" id="PS00464">
    <property type="entry name" value="RIBOSOMAL_L22"/>
    <property type="match status" value="1"/>
</dbReference>
<sequence length="121" mass="13369">MEAKAIARHLRVTPMKARRVVDLVRGKQATEALAILKFAQQGASEPVYKLVTSAVANARVKADREGQAFDEDALYITEAFVDEGPTMKRFQPRAQGRAYRINKRTSHVTVVVASKDEKGGN</sequence>
<evidence type="ECO:0000255" key="1">
    <source>
        <dbReference type="HAMAP-Rule" id="MF_01331"/>
    </source>
</evidence>
<evidence type="ECO:0000305" key="2"/>
<accession>C5CC57</accession>
<reference key="1">
    <citation type="journal article" date="2010" name="J. Bacteriol.">
        <title>Genome sequence of the Fleming strain of Micrococcus luteus, a simple free-living actinobacterium.</title>
        <authorList>
            <person name="Young M."/>
            <person name="Artsatbanov V."/>
            <person name="Beller H.R."/>
            <person name="Chandra G."/>
            <person name="Chater K.F."/>
            <person name="Dover L.G."/>
            <person name="Goh E.B."/>
            <person name="Kahan T."/>
            <person name="Kaprelyants A.S."/>
            <person name="Kyrpides N."/>
            <person name="Lapidus A."/>
            <person name="Lowry S.R."/>
            <person name="Lykidis A."/>
            <person name="Mahillon J."/>
            <person name="Markowitz V."/>
            <person name="Mavromatis K."/>
            <person name="Mukamolova G.V."/>
            <person name="Oren A."/>
            <person name="Rokem J.S."/>
            <person name="Smith M.C."/>
            <person name="Young D.I."/>
            <person name="Greenblatt C.L."/>
        </authorList>
    </citation>
    <scope>NUCLEOTIDE SEQUENCE [LARGE SCALE GENOMIC DNA]</scope>
    <source>
        <strain>ATCC 4698 / DSM 20030 / JCM 1464 / CCM 169 / CCUG 5858 / IAM 1056 / NBRC 3333 / NCIMB 9278 / NCTC 2665 / VKM Ac-2230</strain>
    </source>
</reference>
<name>RL22_MICLC</name>
<gene>
    <name evidence="1" type="primary">rplV</name>
    <name type="ordered locus">Mlut_17110</name>
</gene>